<protein>
    <recommendedName>
        <fullName>Transcription factor p65</fullName>
    </recommendedName>
    <alternativeName>
        <fullName>Nuclear factor NF-kappa-B p65 subunit</fullName>
    </alternativeName>
    <alternativeName>
        <fullName>Nuclear factor of kappa light polypeptide gene enhancer in B-cells 3</fullName>
    </alternativeName>
</protein>
<accession>Q04207</accession>
<accession>Q62025</accession>
<reference key="1">
    <citation type="journal article" date="1991" name="Cell">
        <title>DNA binding and I kappa B inhibition of the cloned p65 subunit of NF-kappa B, a rel-related polypeptide.</title>
        <authorList>
            <person name="Nolan G.P."/>
            <person name="Ghosh S."/>
            <person name="Liou H.C."/>
            <person name="Tempst P."/>
            <person name="Baltimore D."/>
        </authorList>
    </citation>
    <scope>NUCLEOTIDE SEQUENCE [MRNA] (ISOFORM P65)</scope>
</reference>
<reference key="2">
    <citation type="journal article" date="2004" name="Genome Res.">
        <title>The status, quality, and expansion of the NIH full-length cDNA project: the Mammalian Gene Collection (MGC).</title>
        <authorList>
            <consortium name="The MGC Project Team"/>
        </authorList>
    </citation>
    <scope>NUCLEOTIDE SEQUENCE [LARGE SCALE MRNA] (ISOFORM P65)</scope>
    <source>
        <strain>C57BL/6J</strain>
        <tissue>Mammary gland</tissue>
    </source>
</reference>
<reference key="3">
    <citation type="journal article" date="1996" name="Gene">
        <title>Cloning of the murine relA (p65 NF-kappa B) gene and comparison to the human gene reveals a distinct first intron.</title>
        <authorList>
            <person name="Linker R.A."/>
            <person name="Baeuerle P.A."/>
            <person name="Kaltschmidt C."/>
        </authorList>
    </citation>
    <scope>NUCLEOTIDE SEQUENCE [GENOMIC DNA] OF 1-114</scope>
    <source>
        <strain>BALB/cJ</strain>
    </source>
</reference>
<reference key="4">
    <citation type="journal article" date="1993" name="Hum. Mol. Genet.">
        <title>Genomic organization of the gene encoding the p65 subunit of NF-kappa B: multiple variants of the p65 protein may be generated by alternative splicing.</title>
        <authorList>
            <person name="Deloukas P."/>
            <person name="van Loon A.P.G.M."/>
        </authorList>
    </citation>
    <scope>NUCLEOTIDE SEQUENCE [GENOMIC DNA] OF 188-252</scope>
    <scope>ALTERNATIVE SPLICING</scope>
    <source>
        <strain>BALB/cJ</strain>
    </source>
</reference>
<reference key="5">
    <citation type="journal article" date="1996" name="Mol. Cell. Biol.">
        <title>Role of unphosphorylated, newly synthesized IkappaB beta in persistent activation of NF-kappaB.</title>
        <authorList>
            <person name="Suyang H."/>
            <person name="Phillips R.J."/>
            <person name="Douglas I."/>
            <person name="Ghosh S."/>
        </authorList>
    </citation>
    <scope>INTERACTION WITH NFKBIB</scope>
</reference>
<reference key="6">
    <citation type="journal article" date="1999" name="Genes Dev.">
        <title>Signal-induced ubiquitination of IkappaBalpha by the F-box protein Slimb/beta-TrCP.</title>
        <authorList>
            <person name="Spencer E."/>
            <person name="Jiang J."/>
            <person name="Chen Z.J."/>
        </authorList>
    </citation>
    <scope>INTERACTION WITH NFKBIA</scope>
</reference>
<reference key="7">
    <citation type="journal article" date="2002" name="Mol. Cell">
        <title>Peptide-induced negative selection of thymocytes activates transcription of an NF-kappa B inhibitor.</title>
        <authorList>
            <person name="Fiorini E."/>
            <person name="Schmitz I."/>
            <person name="Marissen W.E."/>
            <person name="Osborn S.L."/>
            <person name="Touma M."/>
            <person name="Sasada T."/>
            <person name="Reche P.A."/>
            <person name="Tibaldi E.V."/>
            <person name="Hussey R.E."/>
            <person name="Kruisbeek A.M."/>
            <person name="Reinherz E.L."/>
            <person name="Clayton L.K."/>
        </authorList>
    </citation>
    <scope>INTERACTION WITH NFKBID</scope>
</reference>
<reference key="8">
    <citation type="journal article" date="2003" name="EMBO J.">
        <title>Essential role of RelA Ser311 phosphorylation by zetaPKC in NF-kappaB transcriptional activation.</title>
        <authorList>
            <person name="Duran A."/>
            <person name="Diaz-Meco M.T."/>
            <person name="Moscat J."/>
        </authorList>
    </citation>
    <scope>PHOSPHORYLATION AT SER-311</scope>
</reference>
<reference key="9">
    <citation type="journal article" date="2003" name="J. Biol. Chem.">
        <title>Critical role of RelB serine 368 for dimerization and p100 stabilization.</title>
        <authorList>
            <person name="Maier H.J."/>
            <person name="Marienfeld R."/>
            <person name="Wirth T."/>
            <person name="Baumann B."/>
        </authorList>
    </citation>
    <scope>MUTAGENESIS OF SER-281</scope>
</reference>
<reference key="10">
    <citation type="journal article" date="2004" name="J. Exp. Med.">
        <title>A defect in nucleosome remodeling prevents IL-12(p35) gene transcription in neonatal dendritic cells.</title>
        <authorList>
            <person name="Goriely S."/>
            <person name="Van Lint C."/>
            <person name="Dadkhah R."/>
            <person name="Libin M."/>
            <person name="De Wit D."/>
            <person name="Demonte D."/>
            <person name="Willems F."/>
            <person name="Goldman M."/>
        </authorList>
    </citation>
    <scope>IDENTIFICATION IN THE NF-KAPPA-B P65-P50 COMPLEX</scope>
    <scope>IDENTIFICATION IN THE NF-KAPPA-B P65-P65 COMPLEX</scope>
</reference>
<reference key="11">
    <citation type="journal article" date="2004" name="Mol. Cell. Biol.">
        <title>Tumor necrosis factor alpha induction of NF-kappaB requires the novel coactivator SIMPL.</title>
        <authorList>
            <person name="Kwon H.-J."/>
            <person name="Breese E.H."/>
            <person name="Vig-Varga E."/>
            <person name="Luo Y."/>
            <person name="Lee Y."/>
            <person name="Goebl M.G."/>
            <person name="Harrington M.A."/>
        </authorList>
    </citation>
    <scope>INTERACTION WITH IRAK1BP1</scope>
</reference>
<reference key="12">
    <citation type="journal article" date="2005" name="EMBO J.">
        <title>Arginine methyltransferase CARM1 is a promoter-specific regulator of NF-kappaB-dependent gene expression.</title>
        <authorList>
            <person name="Covic M."/>
            <person name="Hassa P.O."/>
            <person name="Saccani S."/>
            <person name="Buerki C."/>
            <person name="Meier N.I."/>
            <person name="Lombardi C."/>
            <person name="Imhof R."/>
            <person name="Bedford M.T."/>
            <person name="Natoli G."/>
            <person name="Hottiger M.O."/>
        </authorList>
    </citation>
    <scope>INTERACTION WITH CARM1</scope>
</reference>
<reference key="13">
    <citation type="journal article" date="2008" name="Mol. Cell. Biol.">
        <title>The association of Notch2 and NF-kappaB accelerates RANKL-induced osteoclastogenesis.</title>
        <authorList>
            <person name="Fukushima H."/>
            <person name="Nakao A."/>
            <person name="Okamoto F."/>
            <person name="Shin M."/>
            <person name="Kajiya H."/>
            <person name="Sakano S."/>
            <person name="Bigas A."/>
            <person name="Jimi E."/>
            <person name="Okabe K."/>
        </authorList>
    </citation>
    <scope>INTERACTION WITH NOTCH2</scope>
</reference>
<reference key="14">
    <citation type="journal article" date="2010" name="Cell">
        <title>A tissue-specific atlas of mouse protein phosphorylation and expression.</title>
        <authorList>
            <person name="Huttlin E.L."/>
            <person name="Jedrychowski M.P."/>
            <person name="Elias J.E."/>
            <person name="Goswami T."/>
            <person name="Rad R."/>
            <person name="Beausoleil S.A."/>
            <person name="Villen J."/>
            <person name="Haas W."/>
            <person name="Sowa M.E."/>
            <person name="Gygi S.P."/>
        </authorList>
    </citation>
    <scope>PHOSPHORYLATION [LARGE SCALE ANALYSIS] AT THR-176</scope>
    <scope>IDENTIFICATION BY MASS SPECTROMETRY [LARGE SCALE ANALYSIS]</scope>
    <source>
        <tissue>Liver</tissue>
        <tissue>Lung</tissue>
        <tissue>Spleen</tissue>
        <tissue>Testis</tissue>
    </source>
</reference>
<reference key="15">
    <citation type="journal article" date="2011" name="Nat. Immunol.">
        <title>Lysine methylation of the NF-kappaB subunit RelA by SETD6 couples activity of the histone methyltransferase GLP at chromatin to tonic repression of NF-kappaB signaling.</title>
        <authorList>
            <person name="Levy D."/>
            <person name="Kuo A.J."/>
            <person name="Chang Y."/>
            <person name="Schaefer U."/>
            <person name="Kitson C."/>
            <person name="Cheung P."/>
            <person name="Espejo A."/>
            <person name="Zee B.M."/>
            <person name="Liu C.L."/>
            <person name="Tangsombatvisit S."/>
            <person name="Tennen R.I."/>
            <person name="Kuo A.Y."/>
            <person name="Tanjing S."/>
            <person name="Cheung R."/>
            <person name="Chua K.F."/>
            <person name="Utz P.J."/>
            <person name="Shi X."/>
            <person name="Prinjha R.K."/>
            <person name="Lee K."/>
            <person name="Garcia B.A."/>
            <person name="Bedford M.T."/>
            <person name="Tarakhovsky A."/>
            <person name="Cheng X."/>
            <person name="Gozani O."/>
        </authorList>
    </citation>
    <scope>FUNCTION</scope>
    <scope>SUBCELLULAR LOCATION</scope>
    <scope>METHYLATION AT LYS-310</scope>
    <scope>PHOSPHORYLATION AT SER-311</scope>
    <scope>INTERACTION WITH EHMT1</scope>
    <scope>MUTAGENESIS OF LYS-310</scope>
</reference>
<reference key="16">
    <citation type="journal article" date="2012" name="Mol. Cell">
        <title>Hydrogen sulfide-linked sulfhydration of NF-kappaB mediates its antiapoptotic actions.</title>
        <authorList>
            <person name="Sen N."/>
            <person name="Paul B.D."/>
            <person name="Gadalla M.M."/>
            <person name="Mustafa A.K."/>
            <person name="Sen T."/>
            <person name="Xu R."/>
            <person name="Kim S."/>
            <person name="Snyder S.H."/>
        </authorList>
    </citation>
    <scope>FUNCTION</scope>
    <scope>SULFHYDRATION AT CYS-38</scope>
    <scope>S-NITROSYLATION AT CYS-38</scope>
    <scope>MUTAGENESIS OF CYS-38</scope>
</reference>
<reference key="17">
    <citation type="journal article" date="2012" name="Mol. Cell">
        <title>Control of proinflammatory gene programs by regulated trimethylation and demethylation of histone H4K20.</title>
        <authorList>
            <person name="Stender J.D."/>
            <person name="Pascual G."/>
            <person name="Liu W."/>
            <person name="Kaikkonen M.U."/>
            <person name="Do K."/>
            <person name="Spann N.J."/>
            <person name="Boutros M."/>
            <person name="Perrimon N."/>
            <person name="Rosenfeld M.G."/>
            <person name="Glass C.K."/>
        </authorList>
    </citation>
    <scope>INTERACTION WITH PHF2</scope>
</reference>
<reference key="18">
    <citation type="journal article" date="2012" name="Proc. Natl. Acad. Sci. U.S.A.">
        <title>Core circadian protein CLOCK is a positive regulator of NF-kappaB-mediated transcription.</title>
        <authorList>
            <person name="Spengler M.L."/>
            <person name="Kuropatwinski K.K."/>
            <person name="Comas M."/>
            <person name="Gasparian A.V."/>
            <person name="Fedtsova N."/>
            <person name="Gleiberman A.S."/>
            <person name="Gitlin I.I."/>
            <person name="Artemicheva N.M."/>
            <person name="Deluca K.A."/>
            <person name="Gudkov A.V."/>
            <person name="Antoch M.P."/>
        </authorList>
    </citation>
    <scope>INTERACTION WITH CLOCK</scope>
</reference>
<reference key="19">
    <citation type="journal article" date="2013" name="J. Immunol.">
        <title>Lysine 313 of T-box is crucial for modulation of protein stability, DNA binding, and threonine phosphorylation of T-bet.</title>
        <authorList>
            <person name="Jang E.J."/>
            <person name="Park H.R."/>
            <person name="Hong J.H."/>
            <person name="Hwang E.S."/>
        </authorList>
    </citation>
    <scope>INTERACTION WITH TBX21</scope>
</reference>
<reference key="20">
    <citation type="journal article" date="2013" name="Mol. Cell">
        <title>SIRT5-mediated lysine desuccinylation impacts diverse metabolic pathways.</title>
        <authorList>
            <person name="Park J."/>
            <person name="Chen Y."/>
            <person name="Tishkoff D.X."/>
            <person name="Peng C."/>
            <person name="Tan M."/>
            <person name="Dai L."/>
            <person name="Xie Z."/>
            <person name="Zhang Y."/>
            <person name="Zwaans B.M."/>
            <person name="Skinner M.E."/>
            <person name="Lombard D.B."/>
            <person name="Zhao Y."/>
        </authorList>
    </citation>
    <scope>ACETYLATION [LARGE SCALE ANALYSIS] AT LYS-310</scope>
    <scope>IDENTIFICATION BY MASS SPECTROMETRY [LARGE SCALE ANALYSIS]</scope>
    <source>
        <tissue>Embryonic fibroblast</tissue>
    </source>
</reference>
<reference key="21">
    <citation type="journal article" date="2014" name="EMBO J.">
        <title>K-Lysine acetyltransferase 2a regulates a hippocampal gene expression network linked to memory formation.</title>
        <authorList>
            <person name="Stilling R.M."/>
            <person name="Roenicke R."/>
            <person name="Benito E."/>
            <person name="Urbanke H."/>
            <person name="Capece V."/>
            <person name="Burkhardt S."/>
            <person name="Bahari-Javan S."/>
            <person name="Barth J."/>
            <person name="Sananbenesi F."/>
            <person name="Schuetz A.L."/>
            <person name="Dyczkowski J."/>
            <person name="Martinez-Hernandez A."/>
            <person name="Kerimoglu C."/>
            <person name="Dent S.Y."/>
            <person name="Bonn S."/>
            <person name="Reymann K.G."/>
            <person name="Fischer A."/>
        </authorList>
    </citation>
    <scope>INTERACTION WITH KAT2A</scope>
</reference>
<reference key="22">
    <citation type="journal article" date="2017" name="J. Exp. Med.">
        <title>Human RELA haploinsufficiency results in autosomal-dominant chronic mucocutaneous ulceration.</title>
        <authorList>
            <person name="Badran Y.R."/>
            <person name="Dedeoglu F."/>
            <person name="Leyva Castillo J.M."/>
            <person name="Bainter W."/>
            <person name="Ohsumi T.K."/>
            <person name="Bousvaros A."/>
            <person name="Goldsmith J.D."/>
            <person name="Geha R.S."/>
            <person name="Chou J."/>
        </authorList>
    </citation>
    <scope>DISRUPTION PHENOTYPE</scope>
</reference>
<reference key="23">
    <citation type="journal article" date="2017" name="Sci. Rep.">
        <title>MKRN2 is a novel ubiquitin E3 ligase for the p65 subunit of NF-kappaB and negatively regulates inflammatory responses.</title>
        <authorList>
            <person name="Shin C."/>
            <person name="Ito Y."/>
            <person name="Ichikawa S."/>
            <person name="Tokunaga M."/>
            <person name="Sakata-Sogawa K."/>
            <person name="Tanaka T."/>
        </authorList>
    </citation>
    <scope>INTERACTION WITH MKRN2</scope>
    <scope>SUBCELLULAR LOCATION</scope>
    <scope>UBIQUITINATION</scope>
</reference>
<reference key="24">
    <citation type="journal article" date="2018" name="PLoS Biol.">
        <title>Zbtb7a is a transducer for the control of promoter accessibility by NF-kappa B and multiple other transcription factors.</title>
        <authorList>
            <person name="Ramos Pittol J.M."/>
            <person name="Oruba A."/>
            <person name="Mittler G."/>
            <person name="Saccani S."/>
            <person name="van Essen D."/>
        </authorList>
    </citation>
    <scope>FUNCTION</scope>
    <scope>INTERACTION WITH ZBTB7A</scope>
    <scope>DOMAIN</scope>
    <scope>REGION</scope>
    <scope>MUTAGENESIS OF 361-ASP--SER-370</scope>
</reference>
<reference key="25">
    <citation type="journal article" date="2021" name="Inflammation">
        <title>Mono-macrophage-Derived MANF Alleviates Bacterial Myocarditis by Inhibiting NF-kappaB Activation and Myocardial Inflammation.</title>
        <authorList>
            <person name="Wang C."/>
            <person name="Bao Q."/>
            <person name="Hou C."/>
            <person name="Sun M."/>
            <person name="Song X."/>
            <person name="Cao S."/>
            <person name="Wang X."/>
            <person name="Shen Q."/>
            <person name="Zhao Y."/>
            <person name="Wang D."/>
        </authorList>
    </citation>
    <scope>TISSUE SPECIFICITY</scope>
    <scope>INDUCTION</scope>
</reference>
<reference key="26">
    <citation type="journal article" date="1998" name="Cell">
        <title>The crystal structure of the IkappaBalpha/NF-kappaB complex reveals mechanisms of NF-kappaB inactivation.</title>
        <authorList>
            <person name="Huxford T."/>
            <person name="Huang D.B."/>
            <person name="Malek S."/>
            <person name="Ghosh G."/>
        </authorList>
    </citation>
    <scope>X-RAY CRYSTALLOGRAPHY (2.3 ANGSTROMS) OF 19-291</scope>
</reference>
<reference key="27">
    <citation type="journal article" date="1998" name="Nat. Struct. Biol.">
        <title>A novel DNA recognition mode by the NF-kappa B p65 homodimer.</title>
        <authorList>
            <person name="Chen Y.Q."/>
            <person name="Ghosh S."/>
            <person name="Ghosh G."/>
        </authorList>
    </citation>
    <scope>X-RAY CRYSTALLOGRAPHY (2.7 ANGSTROMS) OF 19-291</scope>
</reference>
<reference key="28">
    <citation type="journal article" date="1998" name="Nature">
        <title>Crystal structure of p50/p65 heterodimer of transcription factor NF-kappaB bound to DNA.</title>
        <authorList>
            <person name="Chen F.E."/>
            <person name="Huang D.B."/>
            <person name="Chen Y.Q."/>
            <person name="Ghosh G."/>
        </authorList>
    </citation>
    <scope>X-RAY CRYSTALLOGRAPHY (2.9 ANGSTROMS)</scope>
</reference>
<proteinExistence type="evidence at protein level"/>
<evidence type="ECO:0000250" key="1"/>
<evidence type="ECO:0000250" key="2">
    <source>
        <dbReference type="UniProtKB" id="Q04206"/>
    </source>
</evidence>
<evidence type="ECO:0000250" key="3">
    <source>
        <dbReference type="UniProtKB" id="Q7TQN4"/>
    </source>
</evidence>
<evidence type="ECO:0000255" key="4"/>
<evidence type="ECO:0000255" key="5">
    <source>
        <dbReference type="PROSITE-ProRule" id="PRU00265"/>
    </source>
</evidence>
<evidence type="ECO:0000256" key="6">
    <source>
        <dbReference type="SAM" id="MobiDB-lite"/>
    </source>
</evidence>
<evidence type="ECO:0000269" key="7">
    <source>
    </source>
</evidence>
<evidence type="ECO:0000269" key="8">
    <source>
    </source>
</evidence>
<evidence type="ECO:0000269" key="9">
    <source>
    </source>
</evidence>
<evidence type="ECO:0000269" key="10">
    <source>
    </source>
</evidence>
<evidence type="ECO:0000269" key="11">
    <source>
    </source>
</evidence>
<evidence type="ECO:0000269" key="12">
    <source>
    </source>
</evidence>
<evidence type="ECO:0000269" key="13">
    <source>
    </source>
</evidence>
<evidence type="ECO:0000269" key="14">
    <source>
    </source>
</evidence>
<evidence type="ECO:0000269" key="15">
    <source>
    </source>
</evidence>
<evidence type="ECO:0000269" key="16">
    <source>
    </source>
</evidence>
<evidence type="ECO:0000269" key="17">
    <source>
    </source>
</evidence>
<evidence type="ECO:0000269" key="18">
    <source>
    </source>
</evidence>
<evidence type="ECO:0000269" key="19">
    <source>
    </source>
</evidence>
<evidence type="ECO:0000269" key="20">
    <source>
    </source>
</evidence>
<evidence type="ECO:0000269" key="21">
    <source>
    </source>
</evidence>
<evidence type="ECO:0000269" key="22">
    <source>
    </source>
</evidence>
<evidence type="ECO:0000269" key="23">
    <source>
    </source>
</evidence>
<evidence type="ECO:0000269" key="24">
    <source>
    </source>
</evidence>
<evidence type="ECO:0000269" key="25">
    <source>
    </source>
</evidence>
<evidence type="ECO:0000305" key="26"/>
<evidence type="ECO:0007744" key="27">
    <source>
    </source>
</evidence>
<evidence type="ECO:0007744" key="28">
    <source>
    </source>
</evidence>
<evidence type="ECO:0007829" key="29">
    <source>
        <dbReference type="PDB" id="1BFT"/>
    </source>
</evidence>
<evidence type="ECO:0007829" key="30">
    <source>
        <dbReference type="PDB" id="1MY7"/>
    </source>
</evidence>
<evidence type="ECO:0007829" key="31">
    <source>
        <dbReference type="PDB" id="1OY3"/>
    </source>
</evidence>
<evidence type="ECO:0007829" key="32">
    <source>
        <dbReference type="PDB" id="1VKX"/>
    </source>
</evidence>
<evidence type="ECO:0007829" key="33">
    <source>
        <dbReference type="PDB" id="2LWW"/>
    </source>
</evidence>
<evidence type="ECO:0007829" key="34">
    <source>
        <dbReference type="PDB" id="5U01"/>
    </source>
</evidence>
<evidence type="ECO:0007829" key="35">
    <source>
        <dbReference type="PDB" id="9BDW"/>
    </source>
</evidence>
<dbReference type="EMBL" id="M61909">
    <property type="protein sequence ID" value="AAA39811.1"/>
    <property type="molecule type" value="mRNA"/>
</dbReference>
<dbReference type="EMBL" id="BC003818">
    <property type="protein sequence ID" value="AAH03818.1"/>
    <property type="molecule type" value="mRNA"/>
</dbReference>
<dbReference type="EMBL" id="L77155">
    <property type="protein sequence ID" value="AAB00795.1"/>
    <property type="molecule type" value="Genomic_DNA"/>
</dbReference>
<dbReference type="EMBL" id="Z22952">
    <property type="protein sequence ID" value="CAA80528.1"/>
    <property type="molecule type" value="Genomic_DNA"/>
</dbReference>
<dbReference type="CCDS" id="CCDS29473.1">
    <molecule id="Q04207-1"/>
</dbReference>
<dbReference type="PIR" id="A37932">
    <property type="entry name" value="A37932"/>
</dbReference>
<dbReference type="PIR" id="PC4233">
    <property type="entry name" value="PC4233"/>
</dbReference>
<dbReference type="PIR" id="S48113">
    <property type="entry name" value="S48113"/>
</dbReference>
<dbReference type="RefSeq" id="NP_033071.1">
    <molecule id="Q04207-1"/>
    <property type="nucleotide sequence ID" value="NM_009045.5"/>
</dbReference>
<dbReference type="PDB" id="1BFT">
    <property type="method" value="X-ray"/>
    <property type="resolution" value="2.00 A"/>
    <property type="chains" value="A/B=191-291"/>
</dbReference>
<dbReference type="PDB" id="1IKN">
    <property type="method" value="X-ray"/>
    <property type="resolution" value="2.30 A"/>
    <property type="chains" value="A=19-304"/>
</dbReference>
<dbReference type="PDB" id="1K3Z">
    <property type="method" value="X-ray"/>
    <property type="resolution" value="2.50 A"/>
    <property type="chains" value="A/B=191-326"/>
</dbReference>
<dbReference type="PDB" id="1LE5">
    <property type="method" value="X-ray"/>
    <property type="resolution" value="2.75 A"/>
    <property type="chains" value="A/E=20-291"/>
</dbReference>
<dbReference type="PDB" id="1LE9">
    <property type="method" value="X-ray"/>
    <property type="resolution" value="3.00 A"/>
    <property type="chains" value="A/E=20-291"/>
</dbReference>
<dbReference type="PDB" id="1LEI">
    <property type="method" value="X-ray"/>
    <property type="resolution" value="2.70 A"/>
    <property type="chains" value="A=20-291"/>
</dbReference>
<dbReference type="PDB" id="1MY5">
    <property type="method" value="X-ray"/>
    <property type="resolution" value="1.80 A"/>
    <property type="chains" value="A/B=191-304"/>
</dbReference>
<dbReference type="PDB" id="1MY7">
    <property type="method" value="X-ray"/>
    <property type="resolution" value="1.49 A"/>
    <property type="chains" value="A/B=191-304"/>
</dbReference>
<dbReference type="PDB" id="1OY3">
    <property type="method" value="X-ray"/>
    <property type="resolution" value="2.05 A"/>
    <property type="chains" value="B/C=191-326"/>
</dbReference>
<dbReference type="PDB" id="1RAM">
    <property type="method" value="X-ray"/>
    <property type="resolution" value="2.70 A"/>
    <property type="chains" value="A/B=19-291"/>
</dbReference>
<dbReference type="PDB" id="1VKX">
    <property type="method" value="X-ray"/>
    <property type="resolution" value="2.90 A"/>
    <property type="chains" value="A=20-291"/>
</dbReference>
<dbReference type="PDB" id="2I9T">
    <property type="method" value="X-ray"/>
    <property type="resolution" value="2.80 A"/>
    <property type="chains" value="A=19-291"/>
</dbReference>
<dbReference type="PDB" id="2LWW">
    <property type="method" value="NMR"/>
    <property type="chains" value="B=425-490"/>
</dbReference>
<dbReference type="PDB" id="2RAM">
    <property type="method" value="X-ray"/>
    <property type="resolution" value="2.40 A"/>
    <property type="chains" value="A/B=19-291"/>
</dbReference>
<dbReference type="PDB" id="5U01">
    <property type="method" value="X-ray"/>
    <property type="resolution" value="2.50 A"/>
    <property type="chains" value="A/B/C/D=19-291"/>
</dbReference>
<dbReference type="PDB" id="6GGR">
    <property type="method" value="X-ray"/>
    <property type="resolution" value="2.10 A"/>
    <property type="chains" value="A=20-188"/>
</dbReference>
<dbReference type="PDB" id="9BDU">
    <property type="method" value="X-ray"/>
    <property type="resolution" value="2.03 A"/>
    <property type="chains" value="A/B=19-304"/>
</dbReference>
<dbReference type="PDB" id="9BDV">
    <property type="method" value="X-ray"/>
    <property type="resolution" value="1.90 A"/>
    <property type="chains" value="A/B=19-304"/>
</dbReference>
<dbReference type="PDB" id="9BDW">
    <property type="method" value="X-ray"/>
    <property type="resolution" value="1.87 A"/>
    <property type="chains" value="A/B=19-304"/>
</dbReference>
<dbReference type="PDB" id="9BDX">
    <property type="method" value="X-ray"/>
    <property type="resolution" value="3.60 A"/>
    <property type="chains" value="A/B=19-304"/>
</dbReference>
<dbReference type="PDBsum" id="1BFT"/>
<dbReference type="PDBsum" id="1IKN"/>
<dbReference type="PDBsum" id="1K3Z"/>
<dbReference type="PDBsum" id="1LE5"/>
<dbReference type="PDBsum" id="1LE9"/>
<dbReference type="PDBsum" id="1LEI"/>
<dbReference type="PDBsum" id="1MY5"/>
<dbReference type="PDBsum" id="1MY7"/>
<dbReference type="PDBsum" id="1OY3"/>
<dbReference type="PDBsum" id="1RAM"/>
<dbReference type="PDBsum" id="1VKX"/>
<dbReference type="PDBsum" id="2I9T"/>
<dbReference type="PDBsum" id="2LWW"/>
<dbReference type="PDBsum" id="2RAM"/>
<dbReference type="PDBsum" id="5U01"/>
<dbReference type="PDBsum" id="6GGR"/>
<dbReference type="PDBsum" id="9BDU"/>
<dbReference type="PDBsum" id="9BDV"/>
<dbReference type="PDBsum" id="9BDW"/>
<dbReference type="PDBsum" id="9BDX"/>
<dbReference type="BMRB" id="Q04207"/>
<dbReference type="SASBDB" id="Q04207"/>
<dbReference type="SMR" id="Q04207"/>
<dbReference type="BioGRID" id="202853">
    <property type="interactions" value="40"/>
</dbReference>
<dbReference type="CORUM" id="Q04207"/>
<dbReference type="DIP" id="DIP-6219N"/>
<dbReference type="FunCoup" id="Q04207">
    <property type="interactions" value="3464"/>
</dbReference>
<dbReference type="IntAct" id="Q04207">
    <property type="interactions" value="41"/>
</dbReference>
<dbReference type="MINT" id="Q04207"/>
<dbReference type="STRING" id="10090.ENSMUSP00000025867"/>
<dbReference type="BindingDB" id="Q04207"/>
<dbReference type="ChEMBL" id="CHEMBL5902"/>
<dbReference type="GuidetoPHARMACOLOGY" id="3280"/>
<dbReference type="GlyGen" id="Q04207">
    <property type="glycosylation" value="6 sites, 1 O-linked glycan (5 sites)"/>
</dbReference>
<dbReference type="iPTMnet" id="Q04207"/>
<dbReference type="PhosphoSitePlus" id="Q04207"/>
<dbReference type="SwissPalm" id="Q04207"/>
<dbReference type="PaxDb" id="10090-ENSMUSP00000025867"/>
<dbReference type="PeptideAtlas" id="Q04207"/>
<dbReference type="ProteomicsDB" id="258860">
    <molecule id="Q04207-1"/>
</dbReference>
<dbReference type="ProteomicsDB" id="258861">
    <molecule id="Q04207-2"/>
</dbReference>
<dbReference type="Pumba" id="Q04207"/>
<dbReference type="ABCD" id="Q04207">
    <property type="antibodies" value="3 sequenced antibodies"/>
</dbReference>
<dbReference type="Antibodypedia" id="3557">
    <property type="antibodies" value="3844 antibodies from 52 providers"/>
</dbReference>
<dbReference type="DNASU" id="19697"/>
<dbReference type="Ensembl" id="ENSMUST00000025867.6">
    <molecule id="Q04207-1"/>
    <property type="protein sequence ID" value="ENSMUSP00000025867.6"/>
    <property type="gene ID" value="ENSMUSG00000024927.9"/>
</dbReference>
<dbReference type="GeneID" id="19697"/>
<dbReference type="KEGG" id="mmu:19697"/>
<dbReference type="UCSC" id="uc008gee.1">
    <molecule id="Q04207-1"/>
    <property type="organism name" value="mouse"/>
</dbReference>
<dbReference type="AGR" id="MGI:103290"/>
<dbReference type="CTD" id="5970"/>
<dbReference type="MGI" id="MGI:103290">
    <property type="gene designation" value="Rela"/>
</dbReference>
<dbReference type="VEuPathDB" id="HostDB:ENSMUSG00000024927"/>
<dbReference type="eggNOG" id="ENOG502QT4Z">
    <property type="taxonomic scope" value="Eukaryota"/>
</dbReference>
<dbReference type="GeneTree" id="ENSGT00940000159867"/>
<dbReference type="HOGENOM" id="CLU_004343_5_1_1"/>
<dbReference type="InParanoid" id="Q04207"/>
<dbReference type="OMA" id="PVRVHMQ"/>
<dbReference type="OrthoDB" id="7881762at2759"/>
<dbReference type="PhylomeDB" id="Q04207"/>
<dbReference type="TreeFam" id="TF325632"/>
<dbReference type="Reactome" id="R-MMU-1169091">
    <property type="pathway name" value="Activation of NF-kappaB in B cells"/>
</dbReference>
<dbReference type="Reactome" id="R-MMU-1810476">
    <property type="pathway name" value="RIP-mediated NFkB activation via ZBP1"/>
</dbReference>
<dbReference type="Reactome" id="R-MMU-193692">
    <property type="pathway name" value="Regulated proteolysis of p75NTR"/>
</dbReference>
<dbReference type="Reactome" id="R-MMU-202424">
    <property type="pathway name" value="Downstream TCR signaling"/>
</dbReference>
<dbReference type="Reactome" id="R-MMU-209560">
    <property type="pathway name" value="NF-kB is activated and signals survival"/>
</dbReference>
<dbReference type="Reactome" id="R-MMU-2871837">
    <property type="pathway name" value="FCERI mediated NF-kB activation"/>
</dbReference>
<dbReference type="Reactome" id="R-MMU-3134963">
    <property type="pathway name" value="DEx/H-box helicases activate type I IFN and inflammatory cytokines production"/>
</dbReference>
<dbReference type="Reactome" id="R-MMU-3214841">
    <property type="pathway name" value="PKMTs methylate histone lysines"/>
</dbReference>
<dbReference type="Reactome" id="R-MMU-445989">
    <property type="pathway name" value="TAK1-dependent IKK and NF-kappa-B activation"/>
</dbReference>
<dbReference type="Reactome" id="R-MMU-448706">
    <property type="pathway name" value="Interleukin-1 processing"/>
</dbReference>
<dbReference type="Reactome" id="R-MMU-4755510">
    <property type="pathway name" value="SUMOylation of immune response proteins"/>
</dbReference>
<dbReference type="Reactome" id="R-MMU-5607764">
    <property type="pathway name" value="CLEC7A (Dectin-1) signaling"/>
</dbReference>
<dbReference type="Reactome" id="R-MMU-5621575">
    <property type="pathway name" value="CD209 (DC-SIGN) signaling"/>
</dbReference>
<dbReference type="Reactome" id="R-MMU-9020702">
    <property type="pathway name" value="Interleukin-1 signaling"/>
</dbReference>
<dbReference type="Reactome" id="R-MMU-933542">
    <property type="pathway name" value="TRAF6 mediated NF-kB activation"/>
</dbReference>
<dbReference type="Reactome" id="R-MMU-9860927">
    <property type="pathway name" value="Turbulent (oscillatory, disturbed) flow shear stress activates signaling by PIEZO1 and integrins in endothelial cells"/>
</dbReference>
<dbReference type="BioGRID-ORCS" id="19697">
    <property type="hits" value="15 hits in 86 CRISPR screens"/>
</dbReference>
<dbReference type="ChiTaRS" id="Rela">
    <property type="organism name" value="mouse"/>
</dbReference>
<dbReference type="EvolutionaryTrace" id="Q04207"/>
<dbReference type="PRO" id="PR:Q04207"/>
<dbReference type="Proteomes" id="UP000000589">
    <property type="component" value="Chromosome 19"/>
</dbReference>
<dbReference type="RNAct" id="Q04207">
    <property type="molecule type" value="protein"/>
</dbReference>
<dbReference type="Bgee" id="ENSMUSG00000024927">
    <property type="expression patterns" value="Expressed in thoracic mammary gland and 292 other cell types or tissues"/>
</dbReference>
<dbReference type="ExpressionAtlas" id="Q04207">
    <property type="expression patterns" value="baseline and differential"/>
</dbReference>
<dbReference type="GO" id="GO:0000785">
    <property type="term" value="C:chromatin"/>
    <property type="evidence" value="ECO:0000314"/>
    <property type="project" value="BHF-UCL"/>
</dbReference>
<dbReference type="GO" id="GO:0005737">
    <property type="term" value="C:cytoplasm"/>
    <property type="evidence" value="ECO:0000314"/>
    <property type="project" value="UniProtKB"/>
</dbReference>
<dbReference type="GO" id="GO:0005829">
    <property type="term" value="C:cytosol"/>
    <property type="evidence" value="ECO:0000314"/>
    <property type="project" value="MGI"/>
</dbReference>
<dbReference type="GO" id="GO:0098978">
    <property type="term" value="C:glutamatergic synapse"/>
    <property type="evidence" value="ECO:0007669"/>
    <property type="project" value="Ensembl"/>
</dbReference>
<dbReference type="GO" id="GO:0071159">
    <property type="term" value="C:NF-kappaB complex"/>
    <property type="evidence" value="ECO:0000304"/>
    <property type="project" value="UniProtKB"/>
</dbReference>
<dbReference type="GO" id="GO:0035525">
    <property type="term" value="C:NF-kappaB p50/p65 complex"/>
    <property type="evidence" value="ECO:0000314"/>
    <property type="project" value="MGI"/>
</dbReference>
<dbReference type="GO" id="GO:0005634">
    <property type="term" value="C:nucleus"/>
    <property type="evidence" value="ECO:0000314"/>
    <property type="project" value="UniProtKB"/>
</dbReference>
<dbReference type="GO" id="GO:0005667">
    <property type="term" value="C:transcription regulator complex"/>
    <property type="evidence" value="ECO:0000314"/>
    <property type="project" value="MGI"/>
</dbReference>
<dbReference type="GO" id="GO:0042805">
    <property type="term" value="F:actinin binding"/>
    <property type="evidence" value="ECO:0000353"/>
    <property type="project" value="UniProtKB"/>
</dbReference>
<dbReference type="GO" id="GO:0071532">
    <property type="term" value="F:ankyrin repeat binding"/>
    <property type="evidence" value="ECO:0000353"/>
    <property type="project" value="UniProtKB"/>
</dbReference>
<dbReference type="GO" id="GO:0003682">
    <property type="term" value="F:chromatin binding"/>
    <property type="evidence" value="ECO:0000314"/>
    <property type="project" value="UniProtKB"/>
</dbReference>
<dbReference type="GO" id="GO:0031490">
    <property type="term" value="F:chromatin DNA binding"/>
    <property type="evidence" value="ECO:0007669"/>
    <property type="project" value="Ensembl"/>
</dbReference>
<dbReference type="GO" id="GO:0003677">
    <property type="term" value="F:DNA binding"/>
    <property type="evidence" value="ECO:0000314"/>
    <property type="project" value="MGI"/>
</dbReference>
<dbReference type="GO" id="GO:0001228">
    <property type="term" value="F:DNA-binding transcription activator activity, RNA polymerase II-specific"/>
    <property type="evidence" value="ECO:0000314"/>
    <property type="project" value="ARUK-UCL"/>
</dbReference>
<dbReference type="GO" id="GO:0003700">
    <property type="term" value="F:DNA-binding transcription factor activity"/>
    <property type="evidence" value="ECO:0000314"/>
    <property type="project" value="MGI"/>
</dbReference>
<dbReference type="GO" id="GO:0000981">
    <property type="term" value="F:DNA-binding transcription factor activity, RNA polymerase II-specific"/>
    <property type="evidence" value="ECO:0000314"/>
    <property type="project" value="UniProtKB"/>
</dbReference>
<dbReference type="GO" id="GO:0001227">
    <property type="term" value="F:DNA-binding transcription repressor activity, RNA polymerase II-specific"/>
    <property type="evidence" value="ECO:0000314"/>
    <property type="project" value="BHF-UCL"/>
</dbReference>
<dbReference type="GO" id="GO:0019899">
    <property type="term" value="F:enzyme binding"/>
    <property type="evidence" value="ECO:0000353"/>
    <property type="project" value="UniProtKB"/>
</dbReference>
<dbReference type="GO" id="GO:0140296">
    <property type="term" value="F:general transcription initiation factor binding"/>
    <property type="evidence" value="ECO:0007669"/>
    <property type="project" value="Ensembl"/>
</dbReference>
<dbReference type="GO" id="GO:0042826">
    <property type="term" value="F:histone deacetylase binding"/>
    <property type="evidence" value="ECO:0007669"/>
    <property type="project" value="Ensembl"/>
</dbReference>
<dbReference type="GO" id="GO:0042802">
    <property type="term" value="F:identical protein binding"/>
    <property type="evidence" value="ECO:0000353"/>
    <property type="project" value="IntAct"/>
</dbReference>
<dbReference type="GO" id="GO:0051059">
    <property type="term" value="F:NF-kappaB binding"/>
    <property type="evidence" value="ECO:0007669"/>
    <property type="project" value="Ensembl"/>
</dbReference>
<dbReference type="GO" id="GO:0042277">
    <property type="term" value="F:peptide binding"/>
    <property type="evidence" value="ECO:0007669"/>
    <property type="project" value="Ensembl"/>
</dbReference>
<dbReference type="GO" id="GO:0042301">
    <property type="term" value="F:phosphate ion binding"/>
    <property type="evidence" value="ECO:0007669"/>
    <property type="project" value="Ensembl"/>
</dbReference>
<dbReference type="GO" id="GO:0042803">
    <property type="term" value="F:protein homodimerization activity"/>
    <property type="evidence" value="ECO:0007669"/>
    <property type="project" value="Ensembl"/>
</dbReference>
<dbReference type="GO" id="GO:0019901">
    <property type="term" value="F:protein kinase binding"/>
    <property type="evidence" value="ECO:0000353"/>
    <property type="project" value="UniProtKB"/>
</dbReference>
<dbReference type="GO" id="GO:0044877">
    <property type="term" value="F:protein-containing complex binding"/>
    <property type="evidence" value="ECO:0007669"/>
    <property type="project" value="Ensembl"/>
</dbReference>
<dbReference type="GO" id="GO:0000978">
    <property type="term" value="F:RNA polymerase II cis-regulatory region sequence-specific DNA binding"/>
    <property type="evidence" value="ECO:0000314"/>
    <property type="project" value="ARUK-UCL"/>
</dbReference>
<dbReference type="GO" id="GO:0000979">
    <property type="term" value="F:RNA polymerase II core promoter sequence-specific DNA binding"/>
    <property type="evidence" value="ECO:0007669"/>
    <property type="project" value="Ensembl"/>
</dbReference>
<dbReference type="GO" id="GO:0000977">
    <property type="term" value="F:RNA polymerase II transcription regulatory region sequence-specific DNA binding"/>
    <property type="evidence" value="ECO:0000314"/>
    <property type="project" value="MGI"/>
</dbReference>
<dbReference type="GO" id="GO:0043565">
    <property type="term" value="F:sequence-specific DNA binding"/>
    <property type="evidence" value="ECO:0000314"/>
    <property type="project" value="MGI"/>
</dbReference>
<dbReference type="GO" id="GO:0001223">
    <property type="term" value="F:transcription coactivator binding"/>
    <property type="evidence" value="ECO:0007669"/>
    <property type="project" value="Ensembl"/>
</dbReference>
<dbReference type="GO" id="GO:0031625">
    <property type="term" value="F:ubiquitin protein ligase binding"/>
    <property type="evidence" value="ECO:0007669"/>
    <property type="project" value="Ensembl"/>
</dbReference>
<dbReference type="GO" id="GO:0009887">
    <property type="term" value="P:animal organ morphogenesis"/>
    <property type="evidence" value="ECO:0000315"/>
    <property type="project" value="MGI"/>
</dbReference>
<dbReference type="GO" id="GO:0140374">
    <property type="term" value="P:antiviral innate immune response"/>
    <property type="evidence" value="ECO:0007669"/>
    <property type="project" value="Ensembl"/>
</dbReference>
<dbReference type="GO" id="GO:0007249">
    <property type="term" value="P:canonical NF-kappaB signal transduction"/>
    <property type="evidence" value="ECO:0000314"/>
    <property type="project" value="MGI"/>
</dbReference>
<dbReference type="GO" id="GO:1904385">
    <property type="term" value="P:cellular response to angiotensin"/>
    <property type="evidence" value="ECO:0007669"/>
    <property type="project" value="Ensembl"/>
</dbReference>
<dbReference type="GO" id="GO:0035729">
    <property type="term" value="P:cellular response to hepatocyte growth factor stimulus"/>
    <property type="evidence" value="ECO:0000314"/>
    <property type="project" value="MGI"/>
</dbReference>
<dbReference type="GO" id="GO:0070301">
    <property type="term" value="P:cellular response to hydrogen peroxide"/>
    <property type="evidence" value="ECO:0000250"/>
    <property type="project" value="UniProtKB"/>
</dbReference>
<dbReference type="GO" id="GO:0071354">
    <property type="term" value="P:cellular response to interleukin-6"/>
    <property type="evidence" value="ECO:0007669"/>
    <property type="project" value="Ensembl"/>
</dbReference>
<dbReference type="GO" id="GO:0071222">
    <property type="term" value="P:cellular response to lipopolysaccharide"/>
    <property type="evidence" value="ECO:0000270"/>
    <property type="project" value="UniProtKB"/>
</dbReference>
<dbReference type="GO" id="GO:0071223">
    <property type="term" value="P:cellular response to lipoteichoic acid"/>
    <property type="evidence" value="ECO:0007669"/>
    <property type="project" value="Ensembl"/>
</dbReference>
<dbReference type="GO" id="GO:0071316">
    <property type="term" value="P:cellular response to nicotine"/>
    <property type="evidence" value="ECO:0007669"/>
    <property type="project" value="Ensembl"/>
</dbReference>
<dbReference type="GO" id="GO:0071224">
    <property type="term" value="P:cellular response to peptidoglycan"/>
    <property type="evidence" value="ECO:0007669"/>
    <property type="project" value="Ensembl"/>
</dbReference>
<dbReference type="GO" id="GO:0071356">
    <property type="term" value="P:cellular response to tumor necrosis factor"/>
    <property type="evidence" value="ECO:0000250"/>
    <property type="project" value="UniProtKB"/>
</dbReference>
<dbReference type="GO" id="GO:0006325">
    <property type="term" value="P:chromatin organization"/>
    <property type="evidence" value="ECO:0000315"/>
    <property type="project" value="UniProtKB"/>
</dbReference>
<dbReference type="GO" id="GO:0006952">
    <property type="term" value="P:defense response"/>
    <property type="evidence" value="ECO:0000315"/>
    <property type="project" value="MGI"/>
</dbReference>
<dbReference type="GO" id="GO:0002357">
    <property type="term" value="P:defense response to tumor cell"/>
    <property type="evidence" value="ECO:0007669"/>
    <property type="project" value="Ensembl"/>
</dbReference>
<dbReference type="GO" id="GO:0006351">
    <property type="term" value="P:DNA-templated transcription"/>
    <property type="evidence" value="ECO:0000315"/>
    <property type="project" value="UniProtKB"/>
</dbReference>
<dbReference type="GO" id="GO:0001942">
    <property type="term" value="P:hair follicle development"/>
    <property type="evidence" value="ECO:0000315"/>
    <property type="project" value="MGI"/>
</dbReference>
<dbReference type="GO" id="GO:0006954">
    <property type="term" value="P:inflammatory response"/>
    <property type="evidence" value="ECO:0007669"/>
    <property type="project" value="Ensembl"/>
</dbReference>
<dbReference type="GO" id="GO:0070498">
    <property type="term" value="P:interleukin-1-mediated signaling pathway"/>
    <property type="evidence" value="ECO:0007669"/>
    <property type="project" value="Ensembl"/>
</dbReference>
<dbReference type="GO" id="GO:0001889">
    <property type="term" value="P:liver development"/>
    <property type="evidence" value="ECO:0000315"/>
    <property type="project" value="UniProtKB"/>
</dbReference>
<dbReference type="GO" id="GO:0016525">
    <property type="term" value="P:negative regulation of angiogenesis"/>
    <property type="evidence" value="ECO:0007669"/>
    <property type="project" value="Ensembl"/>
</dbReference>
<dbReference type="GO" id="GO:0043066">
    <property type="term" value="P:negative regulation of apoptotic process"/>
    <property type="evidence" value="ECO:0000314"/>
    <property type="project" value="UniProtKB"/>
</dbReference>
<dbReference type="GO" id="GO:1900016">
    <property type="term" value="P:negative regulation of cytokine production involved in inflammatory response"/>
    <property type="evidence" value="ECO:0007669"/>
    <property type="project" value="Ensembl"/>
</dbReference>
<dbReference type="GO" id="GO:2001237">
    <property type="term" value="P:negative regulation of extrinsic apoptotic signaling pathway"/>
    <property type="evidence" value="ECO:0000314"/>
    <property type="project" value="MGI"/>
</dbReference>
<dbReference type="GO" id="GO:0046627">
    <property type="term" value="P:negative regulation of insulin receptor signaling pathway"/>
    <property type="evidence" value="ECO:0007669"/>
    <property type="project" value="Ensembl"/>
</dbReference>
<dbReference type="GO" id="GO:1902894">
    <property type="term" value="P:negative regulation of miRNA transcription"/>
    <property type="evidence" value="ECO:0007669"/>
    <property type="project" value="Ensembl"/>
</dbReference>
<dbReference type="GO" id="GO:1901223">
    <property type="term" value="P:negative regulation of non-canonical NF-kappaB signal transduction"/>
    <property type="evidence" value="ECO:0007669"/>
    <property type="project" value="Ensembl"/>
</dbReference>
<dbReference type="GO" id="GO:0042177">
    <property type="term" value="P:negative regulation of protein catabolic process"/>
    <property type="evidence" value="ECO:0000315"/>
    <property type="project" value="MGI"/>
</dbReference>
<dbReference type="GO" id="GO:0033234">
    <property type="term" value="P:negative regulation of protein sumoylation"/>
    <property type="evidence" value="ECO:0000314"/>
    <property type="project" value="BHF-UCL"/>
</dbReference>
<dbReference type="GO" id="GO:0000122">
    <property type="term" value="P:negative regulation of transcription by RNA polymerase II"/>
    <property type="evidence" value="ECO:0000314"/>
    <property type="project" value="BHF-UCL"/>
</dbReference>
<dbReference type="GO" id="GO:0007218">
    <property type="term" value="P:neuropeptide signaling pathway"/>
    <property type="evidence" value="ECO:0007669"/>
    <property type="project" value="Ensembl"/>
</dbReference>
<dbReference type="GO" id="GO:0038061">
    <property type="term" value="P:non-canonical NF-kappaB signal transduction"/>
    <property type="evidence" value="ECO:0007669"/>
    <property type="project" value="Ensembl"/>
</dbReference>
<dbReference type="GO" id="GO:0070431">
    <property type="term" value="P:nucleotide-binding oligomerization domain containing 2 signaling pathway"/>
    <property type="evidence" value="ECO:0000266"/>
    <property type="project" value="MGI"/>
</dbReference>
<dbReference type="GO" id="GO:1902004">
    <property type="term" value="P:positive regulation of amyloid-beta formation"/>
    <property type="evidence" value="ECO:0000314"/>
    <property type="project" value="ARUK-UCL"/>
</dbReference>
<dbReference type="GO" id="GO:0043123">
    <property type="term" value="P:positive regulation of canonical NF-kappaB signal transduction"/>
    <property type="evidence" value="ECO:0000314"/>
    <property type="project" value="UniProtKB"/>
</dbReference>
<dbReference type="GO" id="GO:0008284">
    <property type="term" value="P:positive regulation of cell population proliferation"/>
    <property type="evidence" value="ECO:0000250"/>
    <property type="project" value="UniProtKB"/>
</dbReference>
<dbReference type="GO" id="GO:0045893">
    <property type="term" value="P:positive regulation of DNA-templated transcription"/>
    <property type="evidence" value="ECO:0000314"/>
    <property type="project" value="UniProtKB"/>
</dbReference>
<dbReference type="GO" id="GO:0032731">
    <property type="term" value="P:positive regulation of interleukin-1 beta production"/>
    <property type="evidence" value="ECO:0007669"/>
    <property type="project" value="Ensembl"/>
</dbReference>
<dbReference type="GO" id="GO:0032735">
    <property type="term" value="P:positive regulation of interleukin-12 production"/>
    <property type="evidence" value="ECO:0000314"/>
    <property type="project" value="MGI"/>
</dbReference>
<dbReference type="GO" id="GO:0032755">
    <property type="term" value="P:positive regulation of interleukin-6 production"/>
    <property type="evidence" value="ECO:0007669"/>
    <property type="project" value="Ensembl"/>
</dbReference>
<dbReference type="GO" id="GO:0032757">
    <property type="term" value="P:positive regulation of interleukin-8 production"/>
    <property type="evidence" value="ECO:0007669"/>
    <property type="project" value="Ensembl"/>
</dbReference>
<dbReference type="GO" id="GO:1904996">
    <property type="term" value="P:positive regulation of leukocyte adhesion to vascular endothelial cell"/>
    <property type="evidence" value="ECO:0007669"/>
    <property type="project" value="Ensembl"/>
</dbReference>
<dbReference type="GO" id="GO:1902895">
    <property type="term" value="P:positive regulation of miRNA transcription"/>
    <property type="evidence" value="ECO:0007669"/>
    <property type="project" value="Ensembl"/>
</dbReference>
<dbReference type="GO" id="GO:0051092">
    <property type="term" value="P:positive regulation of NF-kappaB transcription factor activity"/>
    <property type="evidence" value="ECO:0000314"/>
    <property type="project" value="UniProtKB"/>
</dbReference>
<dbReference type="GO" id="GO:1901224">
    <property type="term" value="P:positive regulation of non-canonical NF-kappaB signal transduction"/>
    <property type="evidence" value="ECO:0007669"/>
    <property type="project" value="Ensembl"/>
</dbReference>
<dbReference type="GO" id="GO:0014040">
    <property type="term" value="P:positive regulation of Schwann cell differentiation"/>
    <property type="evidence" value="ECO:0007669"/>
    <property type="project" value="Ensembl"/>
</dbReference>
<dbReference type="GO" id="GO:0050862">
    <property type="term" value="P:positive regulation of T cell receptor signaling pathway"/>
    <property type="evidence" value="ECO:0007669"/>
    <property type="project" value="Ensembl"/>
</dbReference>
<dbReference type="GO" id="GO:0045944">
    <property type="term" value="P:positive regulation of transcription by RNA polymerase II"/>
    <property type="evidence" value="ECO:0000314"/>
    <property type="project" value="ARUK-UCL"/>
</dbReference>
<dbReference type="GO" id="GO:0010575">
    <property type="term" value="P:positive regulation of vascular endothelial growth factor production"/>
    <property type="evidence" value="ECO:0007669"/>
    <property type="project" value="Ensembl"/>
</dbReference>
<dbReference type="GO" id="GO:0099527">
    <property type="term" value="P:postsynapse to nucleus signaling pathway"/>
    <property type="evidence" value="ECO:0007669"/>
    <property type="project" value="Ensembl"/>
</dbReference>
<dbReference type="GO" id="GO:0038161">
    <property type="term" value="P:prolactin signaling pathway"/>
    <property type="evidence" value="ECO:0007669"/>
    <property type="project" value="Ensembl"/>
</dbReference>
<dbReference type="GO" id="GO:0030163">
    <property type="term" value="P:protein catabolic process"/>
    <property type="evidence" value="ECO:0000315"/>
    <property type="project" value="MGI"/>
</dbReference>
<dbReference type="GO" id="GO:0050727">
    <property type="term" value="P:regulation of inflammatory response"/>
    <property type="evidence" value="ECO:0000314"/>
    <property type="project" value="UniProtKB"/>
</dbReference>
<dbReference type="GO" id="GO:0043200">
    <property type="term" value="P:response to amino acid"/>
    <property type="evidence" value="ECO:0007669"/>
    <property type="project" value="Ensembl"/>
</dbReference>
<dbReference type="GO" id="GO:0009617">
    <property type="term" value="P:response to bacterium"/>
    <property type="evidence" value="ECO:0000314"/>
    <property type="project" value="MGI"/>
</dbReference>
<dbReference type="GO" id="GO:0051591">
    <property type="term" value="P:response to cAMP"/>
    <property type="evidence" value="ECO:0007669"/>
    <property type="project" value="Ensembl"/>
</dbReference>
<dbReference type="GO" id="GO:0033590">
    <property type="term" value="P:response to cobalamin"/>
    <property type="evidence" value="ECO:0007669"/>
    <property type="project" value="Ensembl"/>
</dbReference>
<dbReference type="GO" id="GO:0045471">
    <property type="term" value="P:response to ethanol"/>
    <property type="evidence" value="ECO:0007669"/>
    <property type="project" value="Ensembl"/>
</dbReference>
<dbReference type="GO" id="GO:0032868">
    <property type="term" value="P:response to insulin"/>
    <property type="evidence" value="ECO:0007669"/>
    <property type="project" value="Ensembl"/>
</dbReference>
<dbReference type="GO" id="GO:0002931">
    <property type="term" value="P:response to ischemia"/>
    <property type="evidence" value="ECO:0007669"/>
    <property type="project" value="Ensembl"/>
</dbReference>
<dbReference type="GO" id="GO:0032495">
    <property type="term" value="P:response to muramyl dipeptide"/>
    <property type="evidence" value="ECO:0000314"/>
    <property type="project" value="MGI"/>
</dbReference>
<dbReference type="GO" id="GO:0035994">
    <property type="term" value="P:response to muscle stretch"/>
    <property type="evidence" value="ECO:0000314"/>
    <property type="project" value="MGI"/>
</dbReference>
<dbReference type="GO" id="GO:0032570">
    <property type="term" value="P:response to progesterone"/>
    <property type="evidence" value="ECO:0007669"/>
    <property type="project" value="Ensembl"/>
</dbReference>
<dbReference type="GO" id="GO:0010224">
    <property type="term" value="P:response to UV-B"/>
    <property type="evidence" value="ECO:0007669"/>
    <property type="project" value="Ensembl"/>
</dbReference>
<dbReference type="GO" id="GO:0009410">
    <property type="term" value="P:response to xenobiotic stimulus"/>
    <property type="evidence" value="ECO:0007669"/>
    <property type="project" value="Ensembl"/>
</dbReference>
<dbReference type="GO" id="GO:0023019">
    <property type="term" value="P:signal transduction involved in regulation of gene expression"/>
    <property type="evidence" value="ECO:0007669"/>
    <property type="project" value="Ensembl"/>
</dbReference>
<dbReference type="GO" id="GO:0034142">
    <property type="term" value="P:toll-like receptor 4 signaling pathway"/>
    <property type="evidence" value="ECO:0007669"/>
    <property type="project" value="Ensembl"/>
</dbReference>
<dbReference type="GO" id="GO:0038124">
    <property type="term" value="P:toll-like receptor TLR6:TLR2 signaling pathway"/>
    <property type="evidence" value="ECO:0007669"/>
    <property type="project" value="Ensembl"/>
</dbReference>
<dbReference type="GO" id="GO:0033209">
    <property type="term" value="P:tumor necrosis factor-mediated signaling pathway"/>
    <property type="evidence" value="ECO:0007669"/>
    <property type="project" value="Ensembl"/>
</dbReference>
<dbReference type="GO" id="GO:0038084">
    <property type="term" value="P:vascular endothelial growth factor signaling pathway"/>
    <property type="evidence" value="ECO:0007669"/>
    <property type="project" value="Ensembl"/>
</dbReference>
<dbReference type="CDD" id="cd01177">
    <property type="entry name" value="IPT_NFkappaB"/>
    <property type="match status" value="1"/>
</dbReference>
<dbReference type="CDD" id="cd07885">
    <property type="entry name" value="RHD-n_RelA"/>
    <property type="match status" value="1"/>
</dbReference>
<dbReference type="DisProt" id="DP00129"/>
<dbReference type="FunFam" id="2.60.40.340:FF:000003">
    <property type="entry name" value="NFkB p65 transcription factor"/>
    <property type="match status" value="1"/>
</dbReference>
<dbReference type="FunFam" id="2.60.40.10:FF:000046">
    <property type="entry name" value="Nuclear factor NF-kappa-B p105 subunit"/>
    <property type="match status" value="1"/>
</dbReference>
<dbReference type="Gene3D" id="2.60.40.10">
    <property type="entry name" value="Immunoglobulins"/>
    <property type="match status" value="1"/>
</dbReference>
<dbReference type="Gene3D" id="2.60.40.340">
    <property type="entry name" value="Rel homology domain (RHD), DNA-binding domain"/>
    <property type="match status" value="1"/>
</dbReference>
<dbReference type="InterPro" id="IPR013783">
    <property type="entry name" value="Ig-like_fold"/>
</dbReference>
<dbReference type="InterPro" id="IPR014756">
    <property type="entry name" value="Ig_E-set"/>
</dbReference>
<dbReference type="InterPro" id="IPR002909">
    <property type="entry name" value="IPT_dom"/>
</dbReference>
<dbReference type="InterPro" id="IPR033926">
    <property type="entry name" value="IPT_NFkappaB"/>
</dbReference>
<dbReference type="InterPro" id="IPR000451">
    <property type="entry name" value="NFkB/Dor"/>
</dbReference>
<dbReference type="InterPro" id="IPR008967">
    <property type="entry name" value="p53-like_TF_DNA-bd_sf"/>
</dbReference>
<dbReference type="InterPro" id="IPR030495">
    <property type="entry name" value="RelA_RHD_N"/>
</dbReference>
<dbReference type="InterPro" id="IPR030492">
    <property type="entry name" value="RHD_CS"/>
</dbReference>
<dbReference type="InterPro" id="IPR032397">
    <property type="entry name" value="RHD_dimer"/>
</dbReference>
<dbReference type="InterPro" id="IPR011539">
    <property type="entry name" value="RHD_DNA_bind_dom"/>
</dbReference>
<dbReference type="InterPro" id="IPR037059">
    <property type="entry name" value="RHD_DNA_bind_dom_sf"/>
</dbReference>
<dbReference type="PANTHER" id="PTHR24169">
    <property type="entry name" value="NUCLEAR FACTOR NF-KAPPA-B PROTEIN"/>
    <property type="match status" value="1"/>
</dbReference>
<dbReference type="PANTHER" id="PTHR24169:SF1">
    <property type="entry name" value="TRANSCRIPTION FACTOR P65"/>
    <property type="match status" value="1"/>
</dbReference>
<dbReference type="Pfam" id="PF16179">
    <property type="entry name" value="RHD_dimer"/>
    <property type="match status" value="1"/>
</dbReference>
<dbReference type="Pfam" id="PF00554">
    <property type="entry name" value="RHD_DNA_bind"/>
    <property type="match status" value="1"/>
</dbReference>
<dbReference type="PRINTS" id="PR00057">
    <property type="entry name" value="NFKBTNSCPFCT"/>
</dbReference>
<dbReference type="SMART" id="SM00429">
    <property type="entry name" value="IPT"/>
    <property type="match status" value="1"/>
</dbReference>
<dbReference type="SUPFAM" id="SSF81296">
    <property type="entry name" value="E set domains"/>
    <property type="match status" value="1"/>
</dbReference>
<dbReference type="SUPFAM" id="SSF49417">
    <property type="entry name" value="p53-like transcription factors"/>
    <property type="match status" value="1"/>
</dbReference>
<dbReference type="PROSITE" id="PS01204">
    <property type="entry name" value="REL_1"/>
    <property type="match status" value="1"/>
</dbReference>
<dbReference type="PROSITE" id="PS50254">
    <property type="entry name" value="REL_2"/>
    <property type="match status" value="1"/>
</dbReference>
<feature type="chain" id="PRO_0000205170" description="Transcription factor p65">
    <location>
        <begin position="1"/>
        <end position="549"/>
    </location>
</feature>
<feature type="domain" description="RHD" evidence="5">
    <location>
        <begin position="19"/>
        <end position="306"/>
    </location>
</feature>
<feature type="region of interest" description="Disordered" evidence="6">
    <location>
        <begin position="41"/>
        <end position="60"/>
    </location>
</feature>
<feature type="region of interest" description="Disordered" evidence="6">
    <location>
        <begin position="314"/>
        <end position="347"/>
    </location>
</feature>
<feature type="region of interest" description="Transcriptional activation domain 3" evidence="22">
    <location>
        <begin position="342"/>
        <end position="390"/>
    </location>
</feature>
<feature type="region of interest" description="Disordered" evidence="6">
    <location>
        <begin position="407"/>
        <end position="429"/>
    </location>
</feature>
<feature type="region of interest" description="Transcriptional activation domain 1" evidence="22">
    <location>
        <begin position="413"/>
        <end position="475"/>
    </location>
</feature>
<feature type="region of interest" description="Disordered" evidence="6">
    <location>
        <begin position="504"/>
        <end position="530"/>
    </location>
</feature>
<feature type="region of interest" description="Transcriptional activation domain 2" evidence="22">
    <location>
        <begin position="519"/>
        <end position="549"/>
    </location>
</feature>
<feature type="short sequence motif" description="Nuclear localization signal" evidence="4">
    <location>
        <begin position="301"/>
        <end position="304"/>
    </location>
</feature>
<feature type="short sequence motif" description="9aaTAD" evidence="4">
    <location>
        <begin position="534"/>
        <end position="542"/>
    </location>
</feature>
<feature type="compositionally biased region" description="Pro residues" evidence="6">
    <location>
        <begin position="407"/>
        <end position="416"/>
    </location>
</feature>
<feature type="modified residue" description="N-acetylmethionine" evidence="2">
    <location>
        <position position="1"/>
    </location>
</feature>
<feature type="modified residue" description="Cysteine persulfide; alternate" evidence="15">
    <location>
        <position position="38"/>
    </location>
</feature>
<feature type="modified residue" description="S-nitrosocysteine; alternate" evidence="15">
    <location>
        <position position="38"/>
    </location>
</feature>
<feature type="modified residue" description="N6-acetyllysine; by PCAF and EP300; alternate" evidence="2">
    <location>
        <position position="122"/>
    </location>
</feature>
<feature type="modified residue" description="N6-acetyllysine; by PCAF and EP300; alternate" evidence="2">
    <location>
        <position position="123"/>
    </location>
</feature>
<feature type="modified residue" description="Phosphothreonine" evidence="27">
    <location>
        <position position="176"/>
    </location>
</feature>
<feature type="modified residue" description="N6-acetyllysine" evidence="2">
    <location>
        <position position="218"/>
    </location>
</feature>
<feature type="modified residue" description="N6-acetyllysine" evidence="2">
    <location>
        <position position="221"/>
    </location>
</feature>
<feature type="modified residue" description="Phosphothreonine" evidence="2">
    <location>
        <position position="254"/>
    </location>
</feature>
<feature type="modified residue" description="Phosphoserine; by RPS6KA4 and RPS6KA5" evidence="2">
    <location>
        <position position="276"/>
    </location>
</feature>
<feature type="modified residue" description="Phosphoserine" evidence="2">
    <location>
        <position position="281"/>
    </location>
</feature>
<feature type="modified residue" description="N6-acetyllysine; alternate" evidence="28">
    <location>
        <position position="310"/>
    </location>
</feature>
<feature type="modified residue" description="N6-methyllysine; by SETD6; alternate" evidence="14">
    <location>
        <position position="310"/>
    </location>
</feature>
<feature type="modified residue" description="Phosphoserine; by PKC/PRKCZ" evidence="9 14">
    <location>
        <position position="311"/>
    </location>
</feature>
<feature type="modified residue" description="Phosphothreonine" evidence="2">
    <location>
        <position position="433"/>
    </location>
</feature>
<feature type="modified residue" description="Phosphoserine; by IKKB and IKKE" evidence="2">
    <location>
        <position position="467"/>
    </location>
</feature>
<feature type="modified residue" description="Phosphothreonine; by CHEK1" evidence="2">
    <location>
        <position position="504"/>
    </location>
</feature>
<feature type="modified residue" description="Phosphoserine; by CK2" evidence="2">
    <location>
        <position position="527"/>
    </location>
</feature>
<feature type="modified residue" description="Phosphoserine; by IKKB" evidence="2">
    <location>
        <position position="534"/>
    </location>
</feature>
<feature type="cross-link" description="Glycyl lysine isopeptide (Lys-Gly) (interchain with G-Cter in SUMO3)" evidence="1">
    <location>
        <position position="37"/>
    </location>
</feature>
<feature type="cross-link" description="Glycyl lysine isopeptide (Lys-Gly) (interchain with G-Cter in SUMO3); alternate" evidence="1">
    <location>
        <position position="122"/>
    </location>
</feature>
<feature type="cross-link" description="Glycyl lysine isopeptide (Lys-Gly) (interchain with G-Cter in SUMO3); alternate" evidence="1">
    <location>
        <position position="123"/>
    </location>
</feature>
<feature type="splice variant" id="VSP_005589" description="In isoform p65 delta." evidence="26">
    <location>
        <begin position="222"/>
        <end position="231"/>
    </location>
</feature>
<feature type="mutagenesis site" description="Abolishes sulfhydration and impairs interaction with RPS3." evidence="15">
    <original>C</original>
    <variation>S</variation>
    <location>
        <position position="38"/>
    </location>
</feature>
<feature type="mutagenesis site" description="Abolishes DNA-binding and transcriptional activity." evidence="8">
    <original>S</original>
    <variation>A</variation>
    <variation>E</variation>
    <location>
        <position position="281"/>
    </location>
</feature>
<feature type="mutagenesis site" description="Abolishes monomethylation by SETD6 and interaction with EHMT1." evidence="14">
    <original>K</original>
    <variation>R</variation>
    <location>
        <position position="310"/>
    </location>
</feature>
<feature type="mutagenesis site" description="Loss of interaction with ZBTB7A." evidence="22">
    <original>DEFSPMLLPS</original>
    <variation>AAAAAAAAAA</variation>
    <location>
        <begin position="361"/>
        <end position="370"/>
    </location>
</feature>
<feature type="sequence conflict" description="In Ref. 3; AAB00795." evidence="26" ref="3">
    <original>K</original>
    <variation>N</variation>
    <location>
        <position position="28"/>
    </location>
</feature>
<feature type="sequence conflict" description="In Ref. 3; AAB00795." evidence="26" ref="3">
    <original>I</original>
    <variation>IQKD</variation>
    <location>
        <position position="61"/>
    </location>
</feature>
<feature type="strand" evidence="35">
    <location>
        <begin position="20"/>
        <end position="25"/>
    </location>
</feature>
<feature type="strand" evidence="35">
    <location>
        <begin position="29"/>
        <end position="32"/>
    </location>
</feature>
<feature type="helix" evidence="35">
    <location>
        <begin position="37"/>
        <end position="39"/>
    </location>
</feature>
<feature type="strand" evidence="34">
    <location>
        <begin position="48"/>
        <end position="50"/>
    </location>
</feature>
<feature type="strand" evidence="35">
    <location>
        <begin position="53"/>
        <end position="55"/>
    </location>
</feature>
<feature type="strand" evidence="35">
    <location>
        <begin position="60"/>
        <end position="64"/>
    </location>
</feature>
<feature type="strand" evidence="35">
    <location>
        <begin position="71"/>
        <end position="77"/>
    </location>
</feature>
<feature type="strand" evidence="35">
    <location>
        <begin position="79"/>
        <end position="82"/>
    </location>
</feature>
<feature type="strand" evidence="35">
    <location>
        <begin position="87"/>
        <end position="92"/>
    </location>
</feature>
<feature type="strand" evidence="35">
    <location>
        <begin position="99"/>
        <end position="103"/>
    </location>
</feature>
<feature type="strand" evidence="35">
    <location>
        <begin position="109"/>
        <end position="112"/>
    </location>
</feature>
<feature type="strand" evidence="35">
    <location>
        <begin position="117"/>
        <end position="120"/>
    </location>
</feature>
<feature type="helix" evidence="35">
    <location>
        <begin position="123"/>
        <end position="125"/>
    </location>
</feature>
<feature type="helix" evidence="35">
    <location>
        <begin position="126"/>
        <end position="135"/>
    </location>
</feature>
<feature type="helix" evidence="35">
    <location>
        <begin position="145"/>
        <end position="149"/>
    </location>
</feature>
<feature type="strand" evidence="35">
    <location>
        <begin position="156"/>
        <end position="166"/>
    </location>
</feature>
<feature type="strand" evidence="34">
    <location>
        <begin position="168"/>
        <end position="170"/>
    </location>
</feature>
<feature type="strand" evidence="35">
    <location>
        <begin position="172"/>
        <end position="174"/>
    </location>
</feature>
<feature type="strand" evidence="35">
    <location>
        <begin position="178"/>
        <end position="185"/>
    </location>
</feature>
<feature type="strand" evidence="32">
    <location>
        <begin position="186"/>
        <end position="188"/>
    </location>
</feature>
<feature type="helix" evidence="35">
    <location>
        <begin position="189"/>
        <end position="191"/>
    </location>
</feature>
<feature type="strand" evidence="30">
    <location>
        <begin position="196"/>
        <end position="200"/>
    </location>
</feature>
<feature type="strand" evidence="30">
    <location>
        <begin position="202"/>
        <end position="205"/>
    </location>
</feature>
<feature type="strand" evidence="30">
    <location>
        <begin position="211"/>
        <end position="217"/>
    </location>
</feature>
<feature type="helix" evidence="29">
    <location>
        <begin position="221"/>
        <end position="223"/>
    </location>
</feature>
<feature type="strand" evidence="30">
    <location>
        <begin position="225"/>
        <end position="230"/>
    </location>
</feature>
<feature type="strand" evidence="30">
    <location>
        <begin position="233"/>
        <end position="236"/>
    </location>
</feature>
<feature type="helix" evidence="30">
    <location>
        <begin position="241"/>
        <end position="243"/>
    </location>
</feature>
<feature type="strand" evidence="30">
    <location>
        <begin position="248"/>
        <end position="253"/>
    </location>
</feature>
<feature type="strand" evidence="30">
    <location>
        <begin position="266"/>
        <end position="274"/>
    </location>
</feature>
<feature type="turn" evidence="30">
    <location>
        <begin position="275"/>
        <end position="278"/>
    </location>
</feature>
<feature type="strand" evidence="30">
    <location>
        <begin position="284"/>
        <end position="289"/>
    </location>
</feature>
<feature type="helix" evidence="31">
    <location>
        <begin position="294"/>
        <end position="304"/>
    </location>
</feature>
<feature type="helix" evidence="31">
    <location>
        <begin position="306"/>
        <end position="315"/>
    </location>
</feature>
<feature type="helix" evidence="33">
    <location>
        <begin position="433"/>
        <end position="439"/>
    </location>
</feature>
<feature type="strand" evidence="33">
    <location>
        <begin position="444"/>
        <end position="447"/>
    </location>
</feature>
<feature type="turn" evidence="33">
    <location>
        <begin position="450"/>
        <end position="453"/>
    </location>
</feature>
<feature type="helix" evidence="33">
    <location>
        <begin position="459"/>
        <end position="461"/>
    </location>
</feature>
<feature type="helix" evidence="33">
    <location>
        <begin position="465"/>
        <end position="467"/>
    </location>
</feature>
<feature type="helix" evidence="33">
    <location>
        <begin position="471"/>
        <end position="477"/>
    </location>
</feature>
<feature type="strand" evidence="33">
    <location>
        <begin position="480"/>
        <end position="484"/>
    </location>
</feature>
<organism>
    <name type="scientific">Mus musculus</name>
    <name type="common">Mouse</name>
    <dbReference type="NCBI Taxonomy" id="10090"/>
    <lineage>
        <taxon>Eukaryota</taxon>
        <taxon>Metazoa</taxon>
        <taxon>Chordata</taxon>
        <taxon>Craniata</taxon>
        <taxon>Vertebrata</taxon>
        <taxon>Euteleostomi</taxon>
        <taxon>Mammalia</taxon>
        <taxon>Eutheria</taxon>
        <taxon>Euarchontoglires</taxon>
        <taxon>Glires</taxon>
        <taxon>Rodentia</taxon>
        <taxon>Myomorpha</taxon>
        <taxon>Muroidea</taxon>
        <taxon>Muridae</taxon>
        <taxon>Murinae</taxon>
        <taxon>Mus</taxon>
        <taxon>Mus</taxon>
    </lineage>
</organism>
<name>TF65_MOUSE</name>
<keyword id="KW-0002">3D-structure</keyword>
<keyword id="KW-0007">Acetylation</keyword>
<keyword id="KW-0010">Activator</keyword>
<keyword id="KW-0025">Alternative splicing</keyword>
<keyword id="KW-0963">Cytoplasm</keyword>
<keyword id="KW-0238">DNA-binding</keyword>
<keyword id="KW-1017">Isopeptide bond</keyword>
<keyword id="KW-0488">Methylation</keyword>
<keyword id="KW-0539">Nucleus</keyword>
<keyword id="KW-0597">Phosphoprotein</keyword>
<keyword id="KW-1185">Reference proteome</keyword>
<keyword id="KW-0702">S-nitrosylation</keyword>
<keyword id="KW-0804">Transcription</keyword>
<keyword id="KW-0805">Transcription regulation</keyword>
<keyword id="KW-0832">Ubl conjugation</keyword>
<gene>
    <name type="primary">Rela</name>
    <name type="synonym">Nfkb3</name>
</gene>
<sequence length="549" mass="60212">MDDLFPLIFPSEPAQASGPYVEIIEQPKQRGMRFRYKCEGRSAGSIPGERSTDTTKTHPTIKINGYTGPGTVRISLVTKDPPHRPHPHELVGKDCRDGYYEADLCPDRSIHSFQNLGIQCVKKRDLEQAISQRIQTNNNPFHVPIEEQRGDYDLNAVRLCFQVTVRDPAGRPLLLTPVLSHPIFDNRAPNTAELKICRVNRNSGSCLGGDEIFLLCDKVQKEDIEVYFTGPGWEARGSFSQADVHRQVAIVFRTPPYADPSLQAPVRVSMQLRRPSDRELSEPMEFQYLPDTDDRHRIEEKRKRTYETFKSIMKKSPFNGPTEPRPPTRRIAVPTRNSTSVPKPAPQPYTFPASLSTINFDEFSPMLLPSGQISNQALALAPSSAPVLAQTMVPSSAMVPLAQPPAPAPVLTPGPPQSLSAPVPKSTQAGEGTLSEALLHLQFDADEDLGALLGNSTDPGVFTDLASVDNSEFQQLLNQGVSMSHSTAEPMLMEYPEAITRLVTGSQRPPDPAPTPLGTSGLPNGLSGDEDFSSIADMDFSALLSQISS</sequence>
<comment type="function">
    <text evidence="2 14 15 22">NF-kappa-B is a pleiotropic transcription factor present in almost all cell types and is the endpoint of a series of signal transduction events that are initiated by a vast array of stimuli related to many biological processes such as inflammation, immunity, differentiation, cell growth, tumorigenesis and apoptosis. NF-kappa-B is a homo- or heterodimeric complex formed by the Rel-like domain-containing proteins RELA/p65, RELB, NFKB1/p105, NFKB1/p50, REL and NFKB2/p52. The heterodimeric RELA-NFKB1 complex appears to be most abundant one. The dimers bind at kappa-B sites in the DNA of their target genes and the individual dimers have distinct preferences for different kappa-B sites that they can bind with distinguishable affinity and specificity. Different dimer combinations act as transcriptional activators or repressors, respectively. The NF-kappa-B heterodimeric RELA-NFKB1 and RELA-REL complexes, for instance, function as transcriptional activators. NF-kappa-B is controlled by various mechanisms of post-translational modification and subcellular compartmentalization as well as by interactions with other cofactors or corepressors. NF-kappa-B complexes are held in the cytoplasm in an inactive state complexed with members of the NF-kappa-B inhibitor (I-kappa-B) family. In a conventional activation pathway, I-kappa-B is phosphorylated by I-kappa-B kinases (IKKs) in response to different activators, subsequently degraded thus liberating the active NF-kappa-B complex which translocates to the nucleus. The inhibitory effect of I-kappa-B on NF-kappa-B through retention in the cytoplasm is exerted primarily through the interaction with RELA. RELA shows a weak DNA-binding site which could contribute directly to DNA binding in the NF-kappa-B complex. Besides its activity as a direct transcriptional activator, it is also able to modulate promoters accessibility to transcription factors and thereby indirectly regulate gene expression (PubMed:29813070). Associates with chromatin at the NF-kappa-B promoter region via association with DDX1. Essential for cytokine gene expression in T-cells (By similarity). The NF-kappa-B homodimeric RELA-RELA complex appears to be involved in invasin-mediated activation of IL-8 expression (By similarity).</text>
</comment>
<comment type="subunit">
    <text evidence="2 3 7 10 11 12 13 14 16 17 18 19 20 22 24 25">Component of the NF-kappa-B p65-p50 complex. Component of the NF-kappa-B p65-c-Rel complex. Homodimer; component of the NF-kappa-B p65-p65 complex. Component of the NF-kappa-B p65-p52 complex. May interact with ETHE1. Binds TLE5 and TLE1. Interacts with TP53BP2. Binds to and is phosphorylated by the activated form of either RPS6KA4 or RPS6KA5. Interacts with ING4 and this interaction may be indirect. Interacts with CARM1, USP48 and UNC5CL. Interacts with IRAK1BP1. Interacts with NFKBIA. Interacts with GSK3B. Interacts with NFKBIB. Interacts with NFKBIE. Interacts with NFKBIZ. Part of a 70-90 kDa complex at least consisting of CHUK, IKBKB, NFKBIA, RELA, ELP1 and MAP3K14. Interacts with HDAC3; HDAC3 mediates the deacetylation of RELA. Interacts with HDAC1; the interaction requires non-phosphorylated RELA. Interacts with CBP; the interaction requires phosphorylated RELA. Interacts (phosphorylated at 'Thr-254') with PIN1; the interaction inhibits p65 binding to NFKBIA. Interacts with SOCS1. Interacts with MTDH and PHF11. Interacts with NFKBID. Interacts with ARRB2. Interacts with NFKBIA (when phosphorylated), the interaction is direct; phosphorylated NFKBIA is associated with a SCF(BTRC)-like complex lacking CUL1. Interacts with RNF25. Interacts (via C-terminus) with DDX1 (By similarity). Interacts with UFL1 and COMMD1 (By similarity). Interacts with BRMS1; this promotes deacetylation of 'Lys-310'. Interacts (when acetylated at Lys-310) with BRD4; leading to activation of the NF-kappa-B pathway (By similarity). Interacts with EHMT1 (via ANK repeats). Interacts with NOTCH2. Directly interacts with MEN1; this interaction represses NFKB-mediated transactivation (By similarity). Interacts with AKIP1, which promotes the phosphorylation and nuclear retention of RELA (By similarity). Interacts (via the RHD) with GFI1; the interaction, after bacterial lipopolysaccharide (LPS) stimulation, inhibits the transcriptional activity by interfering with the DNA-binding activity to target gene promoter DNA. Interacts with MEFV (By similarity). Interacts with CLOCK. Interacts with FOXP3 (By similarity). Interacts (via N-terminus) with CPEN1; this interaction induces proteolytic cleavage of p65/RELA subunit and inhibition of NF-kappa-B transcriptional activity (By similarity). Interacts with CDK5RAP3; stimulates the interaction of RELA with HDAC1, HDAC2 and HDAC3 thereby inhibiting NF-kappa-B transcriptional activity (By similarity). Interacts with DHX9; this interaction is direct and activates NF-kappa-B-mediated transcription (By similarity). Interacts with TBX21 (PubMed:23616576). Interacts with LRRC25 (By similarity). Interacts with KAT2A (PubMed:25024434). Interacts (via transcriptional activation domain 3) with ZBTB7A; involved in the control by RELA of the accessibility of target gene promoters (PubMed:29813070). Directly interacts with DDX3X; this interaction may trap RELA in the cytoplasm, impairing nuclear relocalization upon TNF activating signals (By similarity). Interacts with PHF2 (PubMed:22921934). Interacts with MKRN2; the interaction leads to its polyubiquitination and proteasome-dependent degradation (PubMed:28378844). Interacts with ECSIT (By similarity). Interacts with RAB28; the interaction contributes to RELA transport from cytoplasm to nucleus (By similarity).</text>
</comment>
<comment type="interaction">
    <interactant intactId="EBI-644400">
        <id>Q04207</id>
    </interactant>
    <interactant intactId="EBI-296306">
        <id>P45481</id>
        <label>Crebbp</label>
    </interactant>
    <organismsDiffer>false</organismsDiffer>
    <experiments>10</experiments>
</comment>
<comment type="interaction">
    <interactant intactId="EBI-644400">
        <id>Q04207</id>
    </interactant>
    <interactant intactId="EBI-397872">
        <id>Q02248</id>
        <label>Ctnnb1</label>
    </interactant>
    <organismsDiffer>false</organismsDiffer>
    <experiments>5</experiments>
</comment>
<comment type="interaction">
    <interactant intactId="EBI-644400">
        <id>Q04207</id>
    </interactant>
    <interactant intactId="EBI-301912">
        <id>O09106</id>
        <label>Hdac1</label>
    </interactant>
    <organismsDiffer>false</organismsDiffer>
    <experiments>2</experiments>
</comment>
<comment type="interaction">
    <interactant intactId="EBI-644400">
        <id>Q04207</id>
    </interactant>
    <interactant intactId="EBI-5744951">
        <id>Q8VCD5</id>
        <label>Med17</label>
    </interactant>
    <organismsDiffer>false</organismsDiffer>
    <experiments>4</experiments>
</comment>
<comment type="interaction">
    <interactant intactId="EBI-644400">
        <id>Q04207</id>
    </interactant>
    <interactant intactId="EBI-643958">
        <id>P25799</id>
        <label>Nfkb1</label>
    </interactant>
    <organismsDiffer>false</organismsDiffer>
    <experiments>6</experiments>
</comment>
<comment type="interaction">
    <interactant intactId="EBI-644400">
        <id>Q04207</id>
    </interactant>
    <interactant intactId="EBI-643974">
        <id>P25799-1</id>
        <label>Nfkb1</label>
    </interactant>
    <organismsDiffer>false</organismsDiffer>
    <experiments>6</experiments>
</comment>
<comment type="interaction">
    <interactant intactId="EBI-644400">
        <id>Q04207</id>
    </interactant>
    <interactant intactId="EBI-1209193">
        <id>PRO_0000030312</id>
        <label>Nfkb1</label>
        <dbReference type="UniProtKB" id="P25799"/>
    </interactant>
    <organismsDiffer>false</organismsDiffer>
    <experiments>3</experiments>
</comment>
<comment type="interaction">
    <interactant intactId="EBI-644400">
        <id>Q04207</id>
    </interactant>
    <interactant intactId="EBI-1209166">
        <id>Q9WTK5</id>
        <label>Nfkb2</label>
    </interactant>
    <organismsDiffer>false</organismsDiffer>
    <experiments>3</experiments>
</comment>
<comment type="interaction">
    <interactant intactId="EBI-644400">
        <id>Q04207</id>
    </interactant>
    <interactant intactId="EBI-644427">
        <id>Q9Z1E3</id>
        <label>Nfkbia</label>
    </interactant>
    <organismsDiffer>false</organismsDiffer>
    <experiments>9</experiments>
</comment>
<comment type="interaction">
    <interactant intactId="EBI-644400">
        <id>Q04207</id>
    </interactant>
    <interactant intactId="EBI-644469">
        <id>Q60778</id>
        <label>Nfkbib</label>
    </interactant>
    <organismsDiffer>false</organismsDiffer>
    <experiments>12</experiments>
</comment>
<comment type="interaction">
    <interactant intactId="EBI-644400">
        <id>Q04207</id>
    </interactant>
    <interactant intactId="EBI-298897">
        <id>P29477</id>
        <label>Nos2</label>
    </interactant>
    <organismsDiffer>false</organismsDiffer>
    <experiments>3</experiments>
</comment>
<comment type="interaction">
    <interactant intactId="EBI-644400">
        <id>Q04207</id>
    </interactant>
    <interactant intactId="EBI-4310440">
        <id>Q62227</id>
        <label>Nr0b2</label>
    </interactant>
    <organismsDiffer>false</organismsDiffer>
    <experiments>3</experiments>
</comment>
<comment type="interaction">
    <interactant intactId="EBI-644400">
        <id>Q04207</id>
    </interactant>
    <interactant intactId="EBI-10896863">
        <id>P12813</id>
        <label>Nr4a1</label>
    </interactant>
    <organismsDiffer>false</organismsDiffer>
    <experiments>2</experiments>
</comment>
<comment type="interaction">
    <interactant intactId="EBI-644400">
        <id>Q04207</id>
    </interactant>
    <interactant intactId="EBI-2337255">
        <id>Q06219</id>
        <label>Nr4a2</label>
    </interactant>
    <organismsDiffer>false</organismsDiffer>
    <experiments>2</experiments>
</comment>
<comment type="interaction">
    <interactant intactId="EBI-644400">
        <id>Q04207</id>
    </interactant>
    <interactant intactId="EBI-644400">
        <id>Q04207</id>
        <label>Rela</label>
    </interactant>
    <organismsDiffer>false</organismsDiffer>
    <experiments>2</experiments>
</comment>
<comment type="interaction">
    <interactant intactId="EBI-644400">
        <id>Q04207</id>
    </interactant>
    <interactant intactId="EBI-1802585">
        <id>Q923E4</id>
        <label>Sirt1</label>
    </interactant>
    <organismsDiffer>false</organismsDiffer>
    <experiments>2</experiments>
</comment>
<comment type="interaction">
    <interactant intactId="EBI-644400">
        <id>Q04207</id>
    </interactant>
    <interactant intactId="EBI-766087">
        <id>Q9H9B1</id>
        <label>EHMT1</label>
    </interactant>
    <organismsDiffer>true</organismsDiffer>
    <experiments>5</experiments>
</comment>
<comment type="interaction">
    <interactant intactId="EBI-644400">
        <id>Q04207</id>
    </interactant>
    <interactant intactId="EBI-3863032">
        <id>Q8TBK2</id>
        <label>SETD6</label>
    </interactant>
    <organismsDiffer>true</organismsDiffer>
    <experiments>4</experiments>
</comment>
<comment type="interaction">
    <interactant intactId="EBI-644400">
        <id>Q04207</id>
    </interactant>
    <interactant intactId="EBI-1268586">
        <id>Q8WTS6</id>
        <label>SETD7</label>
    </interactant>
    <organismsDiffer>true</organismsDiffer>
    <experiments>2</experiments>
</comment>
<comment type="subcellular location">
    <subcellularLocation>
        <location evidence="14 20">Nucleus</location>
    </subcellularLocation>
    <subcellularLocation>
        <location evidence="14">Cytoplasm</location>
    </subcellularLocation>
    <text evidence="2 14">Nuclear, but also found in the cytoplasm in an inactive form complexed to an inhibitor (I-kappa-B) (PubMed:21131967). Colocalized with DDX1 in the nucleus upon TNF-alpha induction (By similarity). Colocalizes with GFI1 in the nucleus after lipopolysaccharide (LPS) stimulation.</text>
</comment>
<comment type="alternative products">
    <event type="alternative splicing"/>
    <isoform>
        <id>Q04207-1</id>
        <name>p65</name>
        <sequence type="displayed"/>
    </isoform>
    <isoform>
        <id>Q04207-2</id>
        <name>p65 delta</name>
        <sequence type="described" ref="VSP_005589"/>
    </isoform>
</comment>
<comment type="tissue specificity">
    <text evidence="23">Expressed in the myocardium (at protein level).</text>
</comment>
<comment type="induction">
    <text evidence="23">Induced in myocardial tissue by lipopolysaccharide-induced myocarditis.</text>
</comment>
<comment type="domain">
    <text evidence="22">The transcriptional activation domain 3/TA3 does not participate in the direct transcriptional activity of RELA but is involved in the control by RELA of the accessibility of target gene promoters. Mediates interaction with ZBTB7A.</text>
</comment>
<comment type="domain">
    <text evidence="2 22">The transcriptional activation domain 1/TA1 and the transcriptional activation domain 2/TA2 have direct transcriptional activation properties (PubMed:29813070). The 9aaTAD motif found within the transcriptional activation domain 2 is a conserved motif present in a large number of transcription factors that is required for their transcriptional transactivation activity (By similarity).</text>
</comment>
<comment type="PTM">
    <text evidence="2 20">Ubiquitinated by MKRN2, leading to its proteasomal degradation (PubMed:28378844). Degradation is required for termination of NF-kappa-B response (By similarity). Polyubiquitinated via 'Lys-29'-linked ubiquitin; leading to lysosomal degradation (By similarity).</text>
</comment>
<comment type="PTM">
    <text evidence="9 14">Monomethylated at Lys-310 by SETD6. Monomethylation at Lys-310 is recognized by the ANK repeats of EHMT1 and promotes the formation of repressed chromatin at target genes, leading to down-regulation of NF-kappa-B transcription factor activity. Phosphorylation at Ser-311 disrupts the interaction with EHMT1 without preventing monomethylation at Lys-310 and relieves the repression of target genes.</text>
</comment>
<comment type="PTM">
    <text evidence="1 9 14">Phosphorylation on Ser-534 stimulates acetylation on Lys-310 and interaction with CBP; the phosphorylated and acetylated forms show enhanced transcriptional activity (By similarity). Phosphorylation at Ser-311 disrupts the interaction with EHMT1 and promotes transcription factor activity. Phosphorylation at Ser-276 by RPS6KA4 and RPS6KA5 promotes its transactivation and transcriptional activities.</text>
</comment>
<comment type="PTM">
    <text evidence="1">Reversibly acetylated; the acetylation seems to be mediated by CBP, the deacetylation by HDAC3 and SIRT2. Acetylation at Lys-122 enhances DNA binding and impairs association with NFKBIA. Acetylation at Lys-310 is required for full transcriptional activity in the absence of effects on DNA binding and NFKBIA association. Acetylation at Lys-310 promotes interaction with BRD4. Acetylation can also lower DNA-binding and results in nuclear export. Interaction with BRMS1 promotes deacetylation of Lys-310. Lys-310 is deacetylated by SIRT2 (By similarity).</text>
</comment>
<comment type="PTM">
    <text evidence="15">S-nitrosylation of Cys-38 inactivates the enzyme activity.</text>
</comment>
<comment type="PTM">
    <text>Sulfhydration at Cys-38 mediates the anti-apoptotic activity by promoting the interaction with RPS3 and activating the transcription factor activity.</text>
</comment>
<comment type="PTM">
    <text evidence="1">Sumoylation by PIAS3 negatively regulates DNA-bound activated NF-kappa-B.</text>
</comment>
<comment type="PTM">
    <text evidence="2">Proteolytically cleaved within a conserved N-terminus region required for base-specific contact with DNA in a CPEN1-mediated manner, and hence inhibits NF-kappa-B transcriptional activity.</text>
</comment>
<comment type="disruption phenotype">
    <text evidence="21">RELA haploinsufficient mice show cutaneous ulceration, epidermal skin loss and a predominance of neutrophils and macrophages in the dermis and hypodermis in response to TNF treatment.</text>
</comment>